<sequence length="145" mass="16284">MVGRNSAIAAGVCGALFIGYCIYFDRKRRSDPNFKNRLRERRKKQKLAKERAGLSKLPDLKDAEAVQKFFLEEIQLGEELLAQGDYEKGVDHLTNAIAVCGQPQQLLQVLQQTLPPPVFQMLLTKLPTISQRIVSAQSLAEDDVE</sequence>
<name>TOM20_MOUSE</name>
<reference key="1">
    <citation type="journal article" date="2005" name="Science">
        <title>The transcriptional landscape of the mammalian genome.</title>
        <authorList>
            <person name="Carninci P."/>
            <person name="Kasukawa T."/>
            <person name="Katayama S."/>
            <person name="Gough J."/>
            <person name="Frith M.C."/>
            <person name="Maeda N."/>
            <person name="Oyama R."/>
            <person name="Ravasi T."/>
            <person name="Lenhard B."/>
            <person name="Wells C."/>
            <person name="Kodzius R."/>
            <person name="Shimokawa K."/>
            <person name="Bajic V.B."/>
            <person name="Brenner S.E."/>
            <person name="Batalov S."/>
            <person name="Forrest A.R."/>
            <person name="Zavolan M."/>
            <person name="Davis M.J."/>
            <person name="Wilming L.G."/>
            <person name="Aidinis V."/>
            <person name="Allen J.E."/>
            <person name="Ambesi-Impiombato A."/>
            <person name="Apweiler R."/>
            <person name="Aturaliya R.N."/>
            <person name="Bailey T.L."/>
            <person name="Bansal M."/>
            <person name="Baxter L."/>
            <person name="Beisel K.W."/>
            <person name="Bersano T."/>
            <person name="Bono H."/>
            <person name="Chalk A.M."/>
            <person name="Chiu K.P."/>
            <person name="Choudhary V."/>
            <person name="Christoffels A."/>
            <person name="Clutterbuck D.R."/>
            <person name="Crowe M.L."/>
            <person name="Dalla E."/>
            <person name="Dalrymple B.P."/>
            <person name="de Bono B."/>
            <person name="Della Gatta G."/>
            <person name="di Bernardo D."/>
            <person name="Down T."/>
            <person name="Engstrom P."/>
            <person name="Fagiolini M."/>
            <person name="Faulkner G."/>
            <person name="Fletcher C.F."/>
            <person name="Fukushima T."/>
            <person name="Furuno M."/>
            <person name="Futaki S."/>
            <person name="Gariboldi M."/>
            <person name="Georgii-Hemming P."/>
            <person name="Gingeras T.R."/>
            <person name="Gojobori T."/>
            <person name="Green R.E."/>
            <person name="Gustincich S."/>
            <person name="Harbers M."/>
            <person name="Hayashi Y."/>
            <person name="Hensch T.K."/>
            <person name="Hirokawa N."/>
            <person name="Hill D."/>
            <person name="Huminiecki L."/>
            <person name="Iacono M."/>
            <person name="Ikeo K."/>
            <person name="Iwama A."/>
            <person name="Ishikawa T."/>
            <person name="Jakt M."/>
            <person name="Kanapin A."/>
            <person name="Katoh M."/>
            <person name="Kawasawa Y."/>
            <person name="Kelso J."/>
            <person name="Kitamura H."/>
            <person name="Kitano H."/>
            <person name="Kollias G."/>
            <person name="Krishnan S.P."/>
            <person name="Kruger A."/>
            <person name="Kummerfeld S.K."/>
            <person name="Kurochkin I.V."/>
            <person name="Lareau L.F."/>
            <person name="Lazarevic D."/>
            <person name="Lipovich L."/>
            <person name="Liu J."/>
            <person name="Liuni S."/>
            <person name="McWilliam S."/>
            <person name="Madan Babu M."/>
            <person name="Madera M."/>
            <person name="Marchionni L."/>
            <person name="Matsuda H."/>
            <person name="Matsuzawa S."/>
            <person name="Miki H."/>
            <person name="Mignone F."/>
            <person name="Miyake S."/>
            <person name="Morris K."/>
            <person name="Mottagui-Tabar S."/>
            <person name="Mulder N."/>
            <person name="Nakano N."/>
            <person name="Nakauchi H."/>
            <person name="Ng P."/>
            <person name="Nilsson R."/>
            <person name="Nishiguchi S."/>
            <person name="Nishikawa S."/>
            <person name="Nori F."/>
            <person name="Ohara O."/>
            <person name="Okazaki Y."/>
            <person name="Orlando V."/>
            <person name="Pang K.C."/>
            <person name="Pavan W.J."/>
            <person name="Pavesi G."/>
            <person name="Pesole G."/>
            <person name="Petrovsky N."/>
            <person name="Piazza S."/>
            <person name="Reed J."/>
            <person name="Reid J.F."/>
            <person name="Ring B.Z."/>
            <person name="Ringwald M."/>
            <person name="Rost B."/>
            <person name="Ruan Y."/>
            <person name="Salzberg S.L."/>
            <person name="Sandelin A."/>
            <person name="Schneider C."/>
            <person name="Schoenbach C."/>
            <person name="Sekiguchi K."/>
            <person name="Semple C.A."/>
            <person name="Seno S."/>
            <person name="Sessa L."/>
            <person name="Sheng Y."/>
            <person name="Shibata Y."/>
            <person name="Shimada H."/>
            <person name="Shimada K."/>
            <person name="Silva D."/>
            <person name="Sinclair B."/>
            <person name="Sperling S."/>
            <person name="Stupka E."/>
            <person name="Sugiura K."/>
            <person name="Sultana R."/>
            <person name="Takenaka Y."/>
            <person name="Taki K."/>
            <person name="Tammoja K."/>
            <person name="Tan S.L."/>
            <person name="Tang S."/>
            <person name="Taylor M.S."/>
            <person name="Tegner J."/>
            <person name="Teichmann S.A."/>
            <person name="Ueda H.R."/>
            <person name="van Nimwegen E."/>
            <person name="Verardo R."/>
            <person name="Wei C.L."/>
            <person name="Yagi K."/>
            <person name="Yamanishi H."/>
            <person name="Zabarovsky E."/>
            <person name="Zhu S."/>
            <person name="Zimmer A."/>
            <person name="Hide W."/>
            <person name="Bult C."/>
            <person name="Grimmond S.M."/>
            <person name="Teasdale R.D."/>
            <person name="Liu E.T."/>
            <person name="Brusic V."/>
            <person name="Quackenbush J."/>
            <person name="Wahlestedt C."/>
            <person name="Mattick J.S."/>
            <person name="Hume D.A."/>
            <person name="Kai C."/>
            <person name="Sasaki D."/>
            <person name="Tomaru Y."/>
            <person name="Fukuda S."/>
            <person name="Kanamori-Katayama M."/>
            <person name="Suzuki M."/>
            <person name="Aoki J."/>
            <person name="Arakawa T."/>
            <person name="Iida J."/>
            <person name="Imamura K."/>
            <person name="Itoh M."/>
            <person name="Kato T."/>
            <person name="Kawaji H."/>
            <person name="Kawagashira N."/>
            <person name="Kawashima T."/>
            <person name="Kojima M."/>
            <person name="Kondo S."/>
            <person name="Konno H."/>
            <person name="Nakano K."/>
            <person name="Ninomiya N."/>
            <person name="Nishio T."/>
            <person name="Okada M."/>
            <person name="Plessy C."/>
            <person name="Shibata K."/>
            <person name="Shiraki T."/>
            <person name="Suzuki S."/>
            <person name="Tagami M."/>
            <person name="Waki K."/>
            <person name="Watahiki A."/>
            <person name="Okamura-Oho Y."/>
            <person name="Suzuki H."/>
            <person name="Kawai J."/>
            <person name="Hayashizaki Y."/>
        </authorList>
    </citation>
    <scope>NUCLEOTIDE SEQUENCE [LARGE SCALE MRNA]</scope>
    <source>
        <strain>C57BL/6J</strain>
        <tissue>Kidney</tissue>
    </source>
</reference>
<reference key="2">
    <citation type="journal article" date="2004" name="Genome Res.">
        <title>The status, quality, and expansion of the NIH full-length cDNA project: the Mammalian Gene Collection (MGC).</title>
        <authorList>
            <consortium name="The MGC Project Team"/>
        </authorList>
    </citation>
    <scope>NUCLEOTIDE SEQUENCE [LARGE SCALE MRNA]</scope>
    <source>
        <strain>FVB/N</strain>
        <tissue>Mammary tumor</tissue>
    </source>
</reference>
<reference key="3">
    <citation type="submission" date="2007-04" db="UniProtKB">
        <authorList>
            <person name="Lubec G."/>
            <person name="Kang S.U."/>
        </authorList>
    </citation>
    <scope>PROTEIN SEQUENCE OF 126-132</scope>
    <scope>IDENTIFICATION BY MASS SPECTROMETRY</scope>
    <source>
        <strain>C57BL/6J</strain>
        <tissue>Brain</tissue>
    </source>
</reference>
<reference key="4">
    <citation type="journal article" date="2009" name="Acta Histochem. Cytochem.">
        <title>Localization of adenylate kinase 4 in mouse tissues.</title>
        <authorList>
            <person name="Miyoshi K."/>
            <person name="Akazawa Y."/>
            <person name="Horiguchi T."/>
            <person name="Noma T."/>
        </authorList>
    </citation>
    <scope>TISSUE SPECIFICITY</scope>
</reference>
<reference key="5">
    <citation type="journal article" date="2010" name="Cell">
        <title>A tissue-specific atlas of mouse protein phosphorylation and expression.</title>
        <authorList>
            <person name="Huttlin E.L."/>
            <person name="Jedrychowski M.P."/>
            <person name="Elias J.E."/>
            <person name="Goswami T."/>
            <person name="Rad R."/>
            <person name="Beausoleil S.A."/>
            <person name="Villen J."/>
            <person name="Haas W."/>
            <person name="Sowa M.E."/>
            <person name="Gygi S.P."/>
        </authorList>
    </citation>
    <scope>PHOSPHORYLATION [LARGE SCALE ANALYSIS] AT SER-135 AND SER-138</scope>
    <scope>IDENTIFICATION BY MASS SPECTROMETRY [LARGE SCALE ANALYSIS]</scope>
    <source>
        <tissue>Brain</tissue>
        <tissue>Brown adipose tissue</tissue>
        <tissue>Heart</tissue>
        <tissue>Kidney</tissue>
        <tissue>Liver</tissue>
        <tissue>Lung</tissue>
        <tissue>Pancreas</tissue>
        <tissue>Spleen</tissue>
        <tissue>Testis</tissue>
    </source>
</reference>
<reference key="6">
    <citation type="journal article" date="2020" name="PLoS Genet.">
        <title>Deficiency of the Tbc1d21 gene causes male infertility with morphological abnormalities of the sperm mitochondria and flagellum in mice.</title>
        <authorList>
            <person name="Wang Y.Y."/>
            <person name="Ke C.C."/>
            <person name="Chen Y.L."/>
            <person name="Lin Y.H."/>
            <person name="Yu I.S."/>
            <person name="Ku W.C."/>
            <person name="O'Bryan M.K."/>
            <person name="Lin Y.H."/>
        </authorList>
    </citation>
    <scope>INTERACTION WITH TBC1D21</scope>
    <scope>TISSUE SPECIFICITY</scope>
</reference>
<proteinExistence type="evidence at protein level"/>
<feature type="chain" id="PRO_0000051539" description="Mitochondrial import receptor subunit TOM20 homolog">
    <location>
        <begin position="1"/>
        <end position="145"/>
    </location>
</feature>
<feature type="topological domain" description="Mitochondrial intermembrane" evidence="4">
    <location>
        <begin position="1"/>
        <end position="6"/>
    </location>
</feature>
<feature type="transmembrane region" description="Helical" evidence="4">
    <location>
        <begin position="7"/>
        <end position="24"/>
    </location>
</feature>
<feature type="topological domain" description="Cytoplasmic" evidence="4">
    <location>
        <begin position="25"/>
        <end position="145"/>
    </location>
</feature>
<feature type="modified residue" description="Phosphoserine" evidence="8">
    <location>
        <position position="135"/>
    </location>
</feature>
<feature type="modified residue" description="Phosphoserine" evidence="8">
    <location>
        <position position="138"/>
    </location>
</feature>
<feature type="cross-link" description="Glycyl lysine isopeptide (Lys-Gly) (interchain with G-Cter in ubiquitin)" evidence="2">
    <location>
        <position position="35"/>
    </location>
</feature>
<feature type="cross-link" description="Glycyl lysine isopeptide (Lys-Gly) (interchain with G-Cter in ubiquitin)" evidence="2">
    <location>
        <position position="56"/>
    </location>
</feature>
<feature type="cross-link" description="Glycyl lysine isopeptide (Lys-Gly) (interchain with G-Cter in ubiquitin)" evidence="2">
    <location>
        <position position="61"/>
    </location>
</feature>
<feature type="cross-link" description="Glycyl lysine isopeptide (Lys-Gly) (interchain with G-Cter in ubiquitin)" evidence="2">
    <location>
        <position position="68"/>
    </location>
</feature>
<gene>
    <name type="primary">Tomm20</name>
</gene>
<keyword id="KW-0903">Direct protein sequencing</keyword>
<keyword id="KW-1017">Isopeptide bond</keyword>
<keyword id="KW-0472">Membrane</keyword>
<keyword id="KW-0496">Mitochondrion</keyword>
<keyword id="KW-1000">Mitochondrion outer membrane</keyword>
<keyword id="KW-0597">Phosphoprotein</keyword>
<keyword id="KW-0653">Protein transport</keyword>
<keyword id="KW-1185">Reference proteome</keyword>
<keyword id="KW-0812">Transmembrane</keyword>
<keyword id="KW-1133">Transmembrane helix</keyword>
<keyword id="KW-0813">Transport</keyword>
<keyword id="KW-0832">Ubl conjugation</keyword>
<dbReference type="EMBL" id="AK002902">
    <property type="protein sequence ID" value="BAB22444.1"/>
    <property type="molecule type" value="mRNA"/>
</dbReference>
<dbReference type="EMBL" id="BC002087">
    <property type="protein sequence ID" value="AAH02087.1"/>
    <property type="molecule type" value="mRNA"/>
</dbReference>
<dbReference type="CCDS" id="CCDS22786.1"/>
<dbReference type="RefSeq" id="NP_077176.1">
    <property type="nucleotide sequence ID" value="NM_024214.2"/>
</dbReference>
<dbReference type="BMRB" id="Q9DCC8"/>
<dbReference type="SMR" id="Q9DCC8"/>
<dbReference type="BioGRID" id="212562">
    <property type="interactions" value="6"/>
</dbReference>
<dbReference type="DIP" id="DIP-60017N"/>
<dbReference type="FunCoup" id="Q9DCC8">
    <property type="interactions" value="2459"/>
</dbReference>
<dbReference type="IntAct" id="Q9DCC8">
    <property type="interactions" value="2"/>
</dbReference>
<dbReference type="MINT" id="Q9DCC8"/>
<dbReference type="STRING" id="10090.ENSMUSP00000136493"/>
<dbReference type="iPTMnet" id="Q9DCC8"/>
<dbReference type="PhosphoSitePlus" id="Q9DCC8"/>
<dbReference type="jPOST" id="Q9DCC8"/>
<dbReference type="PaxDb" id="10090-ENSMUSP00000136493"/>
<dbReference type="ProteomicsDB" id="260648"/>
<dbReference type="Pumba" id="Q9DCC8"/>
<dbReference type="Antibodypedia" id="2619">
    <property type="antibodies" value="240 antibodies from 34 providers"/>
</dbReference>
<dbReference type="DNASU" id="67952"/>
<dbReference type="Ensembl" id="ENSMUST00000179857.3">
    <property type="protein sequence ID" value="ENSMUSP00000136493.2"/>
    <property type="gene ID" value="ENSMUSG00000093904.3"/>
</dbReference>
<dbReference type="GeneID" id="67952"/>
<dbReference type="KEGG" id="mmu:67952"/>
<dbReference type="UCSC" id="uc009nza.2">
    <property type="organism name" value="mouse"/>
</dbReference>
<dbReference type="AGR" id="MGI:1915202"/>
<dbReference type="CTD" id="9804"/>
<dbReference type="MGI" id="MGI:1915202">
    <property type="gene designation" value="Tomm20"/>
</dbReference>
<dbReference type="VEuPathDB" id="HostDB:ENSMUSG00000093904"/>
<dbReference type="eggNOG" id="KOG4056">
    <property type="taxonomic scope" value="Eukaryota"/>
</dbReference>
<dbReference type="GeneTree" id="ENSGT00390000011698"/>
<dbReference type="HOGENOM" id="CLU_100000_0_0_1"/>
<dbReference type="InParanoid" id="Q9DCC8"/>
<dbReference type="OMA" id="PPPIFQI"/>
<dbReference type="OrthoDB" id="2154253at2759"/>
<dbReference type="PhylomeDB" id="Q9DCC8"/>
<dbReference type="TreeFam" id="TF106200"/>
<dbReference type="Reactome" id="R-MMU-5205685">
    <property type="pathway name" value="PINK1-PRKN Mediated Mitophagy"/>
</dbReference>
<dbReference type="Reactome" id="R-MMU-5689880">
    <property type="pathway name" value="Ub-specific processing proteases"/>
</dbReference>
<dbReference type="BioGRID-ORCS" id="67952">
    <property type="hits" value="9 hits in 56 CRISPR screens"/>
</dbReference>
<dbReference type="ChiTaRS" id="Tomm20">
    <property type="organism name" value="mouse"/>
</dbReference>
<dbReference type="PRO" id="PR:Q9DCC8"/>
<dbReference type="Proteomes" id="UP000000589">
    <property type="component" value="Chromosome 8"/>
</dbReference>
<dbReference type="RNAct" id="Q9DCC8">
    <property type="molecule type" value="protein"/>
</dbReference>
<dbReference type="Bgee" id="ENSMUSG00000093904">
    <property type="expression patterns" value="Expressed in yolk sac and 257 other cell types or tissues"/>
</dbReference>
<dbReference type="ExpressionAtlas" id="Q9DCC8">
    <property type="expression patterns" value="baseline and differential"/>
</dbReference>
<dbReference type="GO" id="GO:0071944">
    <property type="term" value="C:cell periphery"/>
    <property type="evidence" value="ECO:0000314"/>
    <property type="project" value="MGI"/>
</dbReference>
<dbReference type="GO" id="GO:0140494">
    <property type="term" value="C:migrasome"/>
    <property type="evidence" value="ECO:0000314"/>
    <property type="project" value="MGI"/>
</dbReference>
<dbReference type="GO" id="GO:0044233">
    <property type="term" value="C:mitochondria-associated endoplasmic reticulum membrane contact site"/>
    <property type="evidence" value="ECO:0000266"/>
    <property type="project" value="MGI"/>
</dbReference>
<dbReference type="GO" id="GO:0005740">
    <property type="term" value="C:mitochondrial envelope"/>
    <property type="evidence" value="ECO:0000314"/>
    <property type="project" value="MGI"/>
</dbReference>
<dbReference type="GO" id="GO:0005742">
    <property type="term" value="C:mitochondrial outer membrane translocase complex"/>
    <property type="evidence" value="ECO:0007669"/>
    <property type="project" value="InterPro"/>
</dbReference>
<dbReference type="GO" id="GO:0005739">
    <property type="term" value="C:mitochondrion"/>
    <property type="evidence" value="ECO:0000314"/>
    <property type="project" value="MGI"/>
</dbReference>
<dbReference type="GO" id="GO:0097225">
    <property type="term" value="C:sperm midpiece"/>
    <property type="evidence" value="ECO:0000314"/>
    <property type="project" value="UniProtKB"/>
</dbReference>
<dbReference type="GO" id="GO:0030943">
    <property type="term" value="F:mitochondrion targeting sequence binding"/>
    <property type="evidence" value="ECO:0007669"/>
    <property type="project" value="Ensembl"/>
</dbReference>
<dbReference type="GO" id="GO:0015450">
    <property type="term" value="F:protein-transporting ATPase activity"/>
    <property type="evidence" value="ECO:0000250"/>
    <property type="project" value="HGNC-UCL"/>
</dbReference>
<dbReference type="GO" id="GO:0051082">
    <property type="term" value="F:unfolded protein binding"/>
    <property type="evidence" value="ECO:0000250"/>
    <property type="project" value="HGNC-UCL"/>
</dbReference>
<dbReference type="GO" id="GO:0006886">
    <property type="term" value="P:intracellular protein transport"/>
    <property type="evidence" value="ECO:0007669"/>
    <property type="project" value="InterPro"/>
</dbReference>
<dbReference type="GO" id="GO:0006626">
    <property type="term" value="P:protein targeting to mitochondrion"/>
    <property type="evidence" value="ECO:0000250"/>
    <property type="project" value="UniProtKB"/>
</dbReference>
<dbReference type="GO" id="GO:1905242">
    <property type="term" value="P:response to 3,3',5-triiodo-L-thyronine"/>
    <property type="evidence" value="ECO:0007669"/>
    <property type="project" value="Ensembl"/>
</dbReference>
<dbReference type="GO" id="GO:0014850">
    <property type="term" value="P:response to muscle activity"/>
    <property type="evidence" value="ECO:0007669"/>
    <property type="project" value="Ensembl"/>
</dbReference>
<dbReference type="FunFam" id="1.20.960.10:FF:000001">
    <property type="entry name" value="Mitochondrial import receptor subunit TOM20 homolog"/>
    <property type="match status" value="1"/>
</dbReference>
<dbReference type="Gene3D" id="1.20.960.10">
    <property type="entry name" value="Mitochondrial outer membrane translocase complex, subunit Tom20 domain"/>
    <property type="match status" value="1"/>
</dbReference>
<dbReference type="InterPro" id="IPR002056">
    <property type="entry name" value="MAS20"/>
</dbReference>
<dbReference type="InterPro" id="IPR022422">
    <property type="entry name" value="MAS20_rcpt_metazoan"/>
</dbReference>
<dbReference type="InterPro" id="IPR023392">
    <property type="entry name" value="Tom20_dom_sf"/>
</dbReference>
<dbReference type="NCBIfam" id="TIGR00985">
    <property type="entry name" value="3a0801s04tom"/>
    <property type="match status" value="1"/>
</dbReference>
<dbReference type="PANTHER" id="PTHR12430">
    <property type="entry name" value="MITOCHONDRIAL IMPORT RECEPTOR SUBUNIT TOM20"/>
    <property type="match status" value="1"/>
</dbReference>
<dbReference type="PANTHER" id="PTHR12430:SF2">
    <property type="entry name" value="MITOCHONDRIAL IMPORT RECEPTOR SUBUNIT TOM20 HOMOLOG"/>
    <property type="match status" value="1"/>
</dbReference>
<dbReference type="Pfam" id="PF02064">
    <property type="entry name" value="MAS20"/>
    <property type="match status" value="1"/>
</dbReference>
<dbReference type="PIRSF" id="PIRSF037707">
    <property type="entry name" value="MAS20_rcpt"/>
    <property type="match status" value="1"/>
</dbReference>
<dbReference type="PRINTS" id="PR01989">
    <property type="entry name" value="EUOM20RECPTR"/>
</dbReference>
<dbReference type="PRINTS" id="PR00351">
    <property type="entry name" value="OM20RECEPTOR"/>
</dbReference>
<dbReference type="SUPFAM" id="SSF47157">
    <property type="entry name" value="Mitochondrial import receptor subunit Tom20"/>
    <property type="match status" value="1"/>
</dbReference>
<evidence type="ECO:0000250" key="1"/>
<evidence type="ECO:0000250" key="2">
    <source>
        <dbReference type="UniProtKB" id="Q15388"/>
    </source>
</evidence>
<evidence type="ECO:0000250" key="3">
    <source>
        <dbReference type="UniProtKB" id="Q62760"/>
    </source>
</evidence>
<evidence type="ECO:0000255" key="4"/>
<evidence type="ECO:0000269" key="5">
    <source>
    </source>
</evidence>
<evidence type="ECO:0000269" key="6">
    <source>
    </source>
</evidence>
<evidence type="ECO:0000305" key="7"/>
<evidence type="ECO:0007744" key="8">
    <source>
    </source>
</evidence>
<accession>Q9DCC8</accession>
<organism>
    <name type="scientific">Mus musculus</name>
    <name type="common">Mouse</name>
    <dbReference type="NCBI Taxonomy" id="10090"/>
    <lineage>
        <taxon>Eukaryota</taxon>
        <taxon>Metazoa</taxon>
        <taxon>Chordata</taxon>
        <taxon>Craniata</taxon>
        <taxon>Vertebrata</taxon>
        <taxon>Euteleostomi</taxon>
        <taxon>Mammalia</taxon>
        <taxon>Eutheria</taxon>
        <taxon>Euarchontoglires</taxon>
        <taxon>Glires</taxon>
        <taxon>Rodentia</taxon>
        <taxon>Myomorpha</taxon>
        <taxon>Muroidea</taxon>
        <taxon>Muridae</taxon>
        <taxon>Murinae</taxon>
        <taxon>Mus</taxon>
        <taxon>Mus</taxon>
    </lineage>
</organism>
<comment type="function">
    <text evidence="1 3">Central component of the receptor complex responsible for the recognition and translocation of cytosolically synthesized mitochondrial preproteins. Together with TOM22 functions as the transit peptide receptor at the surface of the mitochondrion outer membrane and facilitates the movement of preproteins into the TOM40 translocation pore (By similarity). Required for the translocation across the mitochondrial outer membrane of cytochrome P450 monooxygenases.</text>
</comment>
<comment type="subunit">
    <text evidence="2 6">Forms part of the preprotein translocase complex of the outer mitochondrial membrane (TOM complex) which consists of at least 7 different proteins (TOMM5, TOMM6, TOMM7, TOMM20, TOMM22, TOMM40 and TOMM70). Interacts with TOM22. Interacts with APEX1 (By similarity). Interacts with TBC1D21 (PubMed:32976492). Upon mitochondrial depolarization, interacts with PINK1; the interaction is required for PINK1-TOM-TIM23 supercomplex formation which is critical for PINK1 stabilization at the outer mitochondrial membrane, kinase activation and downstream mitophagy (By similarity).</text>
</comment>
<comment type="subcellular location">
    <subcellularLocation>
        <location evidence="2">Mitochondrion outer membrane</location>
        <topology evidence="4">Single-pass membrane protein</topology>
    </subcellularLocation>
</comment>
<comment type="tissue specificity">
    <text evidence="5 6">Expressed in brain, kidney, stomach, colon, jejunum, ileum, testis, ovary and oviduct (at protein level) (PubMed:19492028). In the brain, expressed in neural cells of the cerebrum and cerebellum (at protein level) (PubMed:19492028). In the kidney, expressed in the proximal to distal tubule in the cortex and the outer and inner zones of the medulla (at protein level) (PubMed:19492028). In the stomach, expressed in the basal layer of stratified squamous epithelia in the forestomach and in the gastric pit and fundic gland of the glandular stomach (at protein level) (PubMed:19492028). Expressed in epithelial cells of the jejunum, ileum, and colon (at protein level) (PubMed:19492028). In the testis, expressed by spermatocytes and spermatogonia (at protein level) (PubMed:19492028). In the ovaries, expressed by follicular epithelial cells and corpus luteum cells (at protein level) (PubMed:19492028). In the oviduct, expressed in the epithelia of the isthmus and the ciliated cells of the ampulla (at protein level) (PubMed:19492028). Expressed in the sperm midpiece (at protein level) (PubMed:19492028, PubMed:32976492).</text>
</comment>
<comment type="PTM">
    <text evidence="2">Ubiquitinated by PRKN during mitophagy, leading to its degradation and enhancement of mitophagy. Deubiquitinated by USP30.</text>
</comment>
<comment type="similarity">
    <text evidence="7">Belongs to the Tom20 family.</text>
</comment>
<protein>
    <recommendedName>
        <fullName>Mitochondrial import receptor subunit TOM20 homolog</fullName>
    </recommendedName>
    <alternativeName>
        <fullName>Mitochondrial 20 kDa outer membrane protein</fullName>
    </alternativeName>
    <alternativeName>
        <fullName>Outer mitochondrial membrane receptor Tom20</fullName>
    </alternativeName>
</protein>